<keyword id="KW-0028">Amino-acid biosynthesis</keyword>
<keyword id="KW-0055">Arginine biosynthesis</keyword>
<keyword id="KW-0963">Cytoplasm</keyword>
<keyword id="KW-0521">NADP</keyword>
<keyword id="KW-0560">Oxidoreductase</keyword>
<keyword id="KW-1185">Reference proteome</keyword>
<evidence type="ECO:0000255" key="1">
    <source>
        <dbReference type="HAMAP-Rule" id="MF_00150"/>
    </source>
</evidence>
<name>ARGC_PSELT</name>
<proteinExistence type="inferred from homology"/>
<organism>
    <name type="scientific">Pseudothermotoga lettingae (strain ATCC BAA-301 / DSM 14385 / NBRC 107922 / TMO)</name>
    <name type="common">Thermotoga lettingae</name>
    <dbReference type="NCBI Taxonomy" id="416591"/>
    <lineage>
        <taxon>Bacteria</taxon>
        <taxon>Thermotogati</taxon>
        <taxon>Thermotogota</taxon>
        <taxon>Thermotogae</taxon>
        <taxon>Thermotogales</taxon>
        <taxon>Thermotogaceae</taxon>
        <taxon>Pseudothermotoga</taxon>
    </lineage>
</organism>
<sequence length="341" mass="38504">MKIRVGILGATGYTGLELLRMLKNHPQVKITYLSSNNFSGQSMKDIYPFAEIDILLSKIDVKEIKANCDVVFTALPAGISYDIVKSLRDENLKIIDLGADLRFDDPSLYEKWYGRTLQDYGLIKRVYGLPELYRSEIKESRFIGNPGCYPTSILLATAPILKRKLLVNGEIIVDSKSGVSGAGKKEELAYSFCEIDGSLKPYSVINHKHVPEIQEQMKKIYHSEVTVIFAPHLVPMVRGILSTIYLKTRLSADELYGLYSEFYRDEYFVHVLKPAIYPSTKWSYGSNHVFISMKKDERTDTAVLISVLDNLVKGASGQAIQNMNILFSLREDTGLTFTVYP</sequence>
<comment type="function">
    <text evidence="1">Catalyzes the NADPH-dependent reduction of N-acetyl-5-glutamyl phosphate to yield N-acetyl-L-glutamate 5-semialdehyde.</text>
</comment>
<comment type="catalytic activity">
    <reaction evidence="1">
        <text>N-acetyl-L-glutamate 5-semialdehyde + phosphate + NADP(+) = N-acetyl-L-glutamyl 5-phosphate + NADPH + H(+)</text>
        <dbReference type="Rhea" id="RHEA:21588"/>
        <dbReference type="ChEBI" id="CHEBI:15378"/>
        <dbReference type="ChEBI" id="CHEBI:29123"/>
        <dbReference type="ChEBI" id="CHEBI:43474"/>
        <dbReference type="ChEBI" id="CHEBI:57783"/>
        <dbReference type="ChEBI" id="CHEBI:57936"/>
        <dbReference type="ChEBI" id="CHEBI:58349"/>
        <dbReference type="EC" id="1.2.1.38"/>
    </reaction>
</comment>
<comment type="pathway">
    <text evidence="1">Amino-acid biosynthesis; L-arginine biosynthesis; N(2)-acetyl-L-ornithine from L-glutamate: step 3/4.</text>
</comment>
<comment type="subcellular location">
    <subcellularLocation>
        <location evidence="1">Cytoplasm</location>
    </subcellularLocation>
</comment>
<comment type="similarity">
    <text evidence="1">Belongs to the NAGSA dehydrogenase family. Type 1 subfamily.</text>
</comment>
<protein>
    <recommendedName>
        <fullName evidence="1">N-acetyl-gamma-glutamyl-phosphate reductase</fullName>
        <shortName evidence="1">AGPR</shortName>
        <ecNumber evidence="1">1.2.1.38</ecNumber>
    </recommendedName>
    <alternativeName>
        <fullName evidence="1">N-acetyl-glutamate semialdehyde dehydrogenase</fullName>
        <shortName evidence="1">NAGSA dehydrogenase</shortName>
    </alternativeName>
</protein>
<accession>A8F448</accession>
<gene>
    <name evidence="1" type="primary">argC</name>
    <name type="ordered locus">Tlet_0365</name>
</gene>
<dbReference type="EC" id="1.2.1.38" evidence="1"/>
<dbReference type="EMBL" id="CP000812">
    <property type="protein sequence ID" value="ABV32932.1"/>
    <property type="molecule type" value="Genomic_DNA"/>
</dbReference>
<dbReference type="RefSeq" id="WP_012002413.1">
    <property type="nucleotide sequence ID" value="NZ_BSDV01000001.1"/>
</dbReference>
<dbReference type="SMR" id="A8F448"/>
<dbReference type="STRING" id="416591.Tlet_0365"/>
<dbReference type="KEGG" id="tle:Tlet_0365"/>
<dbReference type="eggNOG" id="COG0002">
    <property type="taxonomic scope" value="Bacteria"/>
</dbReference>
<dbReference type="HOGENOM" id="CLU_006384_0_1_0"/>
<dbReference type="OrthoDB" id="9801289at2"/>
<dbReference type="UniPathway" id="UPA00068">
    <property type="reaction ID" value="UER00108"/>
</dbReference>
<dbReference type="Proteomes" id="UP000002016">
    <property type="component" value="Chromosome"/>
</dbReference>
<dbReference type="GO" id="GO:0005737">
    <property type="term" value="C:cytoplasm"/>
    <property type="evidence" value="ECO:0007669"/>
    <property type="project" value="UniProtKB-SubCell"/>
</dbReference>
<dbReference type="GO" id="GO:0003942">
    <property type="term" value="F:N-acetyl-gamma-glutamyl-phosphate reductase activity"/>
    <property type="evidence" value="ECO:0007669"/>
    <property type="project" value="UniProtKB-UniRule"/>
</dbReference>
<dbReference type="GO" id="GO:0051287">
    <property type="term" value="F:NAD binding"/>
    <property type="evidence" value="ECO:0007669"/>
    <property type="project" value="InterPro"/>
</dbReference>
<dbReference type="GO" id="GO:0070401">
    <property type="term" value="F:NADP+ binding"/>
    <property type="evidence" value="ECO:0007669"/>
    <property type="project" value="InterPro"/>
</dbReference>
<dbReference type="GO" id="GO:0006526">
    <property type="term" value="P:L-arginine biosynthetic process"/>
    <property type="evidence" value="ECO:0007669"/>
    <property type="project" value="UniProtKB-UniRule"/>
</dbReference>
<dbReference type="CDD" id="cd23934">
    <property type="entry name" value="AGPR_1_C"/>
    <property type="match status" value="1"/>
</dbReference>
<dbReference type="CDD" id="cd17895">
    <property type="entry name" value="AGPR_1_N"/>
    <property type="match status" value="1"/>
</dbReference>
<dbReference type="FunFam" id="3.30.360.10:FF:000014">
    <property type="entry name" value="N-acetyl-gamma-glutamyl-phosphate reductase"/>
    <property type="match status" value="1"/>
</dbReference>
<dbReference type="Gene3D" id="3.30.360.10">
    <property type="entry name" value="Dihydrodipicolinate Reductase, domain 2"/>
    <property type="match status" value="1"/>
</dbReference>
<dbReference type="Gene3D" id="3.40.50.720">
    <property type="entry name" value="NAD(P)-binding Rossmann-like Domain"/>
    <property type="match status" value="1"/>
</dbReference>
<dbReference type="HAMAP" id="MF_00150">
    <property type="entry name" value="ArgC_type1"/>
    <property type="match status" value="1"/>
</dbReference>
<dbReference type="InterPro" id="IPR000706">
    <property type="entry name" value="AGPR_type-1"/>
</dbReference>
<dbReference type="InterPro" id="IPR036291">
    <property type="entry name" value="NAD(P)-bd_dom_sf"/>
</dbReference>
<dbReference type="InterPro" id="IPR050085">
    <property type="entry name" value="NAGSA_dehydrogenase"/>
</dbReference>
<dbReference type="InterPro" id="IPR000534">
    <property type="entry name" value="Semialdehyde_DH_NAD-bd"/>
</dbReference>
<dbReference type="NCBIfam" id="TIGR01850">
    <property type="entry name" value="argC"/>
    <property type="match status" value="1"/>
</dbReference>
<dbReference type="PANTHER" id="PTHR32338:SF10">
    <property type="entry name" value="N-ACETYL-GAMMA-GLUTAMYL-PHOSPHATE REDUCTASE, CHLOROPLASTIC-RELATED"/>
    <property type="match status" value="1"/>
</dbReference>
<dbReference type="PANTHER" id="PTHR32338">
    <property type="entry name" value="N-ACETYL-GAMMA-GLUTAMYL-PHOSPHATE REDUCTASE, CHLOROPLASTIC-RELATED-RELATED"/>
    <property type="match status" value="1"/>
</dbReference>
<dbReference type="Pfam" id="PF01118">
    <property type="entry name" value="Semialdhyde_dh"/>
    <property type="match status" value="1"/>
</dbReference>
<dbReference type="Pfam" id="PF22698">
    <property type="entry name" value="Semialdhyde_dhC_1"/>
    <property type="match status" value="1"/>
</dbReference>
<dbReference type="SMART" id="SM00859">
    <property type="entry name" value="Semialdhyde_dh"/>
    <property type="match status" value="1"/>
</dbReference>
<dbReference type="SUPFAM" id="SSF55347">
    <property type="entry name" value="Glyceraldehyde-3-phosphate dehydrogenase-like, C-terminal domain"/>
    <property type="match status" value="1"/>
</dbReference>
<dbReference type="SUPFAM" id="SSF51735">
    <property type="entry name" value="NAD(P)-binding Rossmann-fold domains"/>
    <property type="match status" value="1"/>
</dbReference>
<feature type="chain" id="PRO_1000123252" description="N-acetyl-gamma-glutamyl-phosphate reductase">
    <location>
        <begin position="1"/>
        <end position="341"/>
    </location>
</feature>
<feature type="active site" evidence="1">
    <location>
        <position position="148"/>
    </location>
</feature>
<reference key="1">
    <citation type="submission" date="2007-08" db="EMBL/GenBank/DDBJ databases">
        <title>Complete sequence of Thermotoga lettingae TMO.</title>
        <authorList>
            <consortium name="US DOE Joint Genome Institute"/>
            <person name="Copeland A."/>
            <person name="Lucas S."/>
            <person name="Lapidus A."/>
            <person name="Barry K."/>
            <person name="Glavina del Rio T."/>
            <person name="Dalin E."/>
            <person name="Tice H."/>
            <person name="Pitluck S."/>
            <person name="Foster B."/>
            <person name="Bruce D."/>
            <person name="Schmutz J."/>
            <person name="Larimer F."/>
            <person name="Land M."/>
            <person name="Hauser L."/>
            <person name="Kyrpides N."/>
            <person name="Mikhailova N."/>
            <person name="Nelson K."/>
            <person name="Gogarten J.P."/>
            <person name="Noll K."/>
            <person name="Richardson P."/>
        </authorList>
    </citation>
    <scope>NUCLEOTIDE SEQUENCE [LARGE SCALE GENOMIC DNA]</scope>
    <source>
        <strain>ATCC BAA-301 / DSM 14385 / NBRC 107922 / TMO</strain>
    </source>
</reference>